<organism>
    <name type="scientific">Mycoplasma mobile (strain ATCC 43663 / 163K / NCTC 11711)</name>
    <name type="common">Mesomycoplasma mobile</name>
    <dbReference type="NCBI Taxonomy" id="267748"/>
    <lineage>
        <taxon>Bacteria</taxon>
        <taxon>Bacillati</taxon>
        <taxon>Mycoplasmatota</taxon>
        <taxon>Mycoplasmoidales</taxon>
        <taxon>Metamycoplasmataceae</taxon>
        <taxon>Mesomycoplasma</taxon>
    </lineage>
</organism>
<dbReference type="EMBL" id="AE017308">
    <property type="protein sequence ID" value="AAT27914.1"/>
    <property type="molecule type" value="Genomic_DNA"/>
</dbReference>
<dbReference type="RefSeq" id="WP_011264948.1">
    <property type="nucleotide sequence ID" value="NC_006908.1"/>
</dbReference>
<dbReference type="SMR" id="Q6KHL6"/>
<dbReference type="STRING" id="267748.MMOB4280"/>
<dbReference type="KEGG" id="mmo:MMOB4280"/>
<dbReference type="eggNOG" id="COG0335">
    <property type="taxonomic scope" value="Bacteria"/>
</dbReference>
<dbReference type="HOGENOM" id="CLU_103507_2_2_14"/>
<dbReference type="OrthoDB" id="9803541at2"/>
<dbReference type="Proteomes" id="UP000009072">
    <property type="component" value="Chromosome"/>
</dbReference>
<dbReference type="GO" id="GO:0022625">
    <property type="term" value="C:cytosolic large ribosomal subunit"/>
    <property type="evidence" value="ECO:0007669"/>
    <property type="project" value="TreeGrafter"/>
</dbReference>
<dbReference type="GO" id="GO:0003735">
    <property type="term" value="F:structural constituent of ribosome"/>
    <property type="evidence" value="ECO:0007669"/>
    <property type="project" value="InterPro"/>
</dbReference>
<dbReference type="GO" id="GO:0006412">
    <property type="term" value="P:translation"/>
    <property type="evidence" value="ECO:0007669"/>
    <property type="project" value="UniProtKB-UniRule"/>
</dbReference>
<dbReference type="FunFam" id="2.30.30.790:FF:000001">
    <property type="entry name" value="50S ribosomal protein L19"/>
    <property type="match status" value="1"/>
</dbReference>
<dbReference type="Gene3D" id="2.30.30.790">
    <property type="match status" value="1"/>
</dbReference>
<dbReference type="HAMAP" id="MF_00402">
    <property type="entry name" value="Ribosomal_bL19"/>
    <property type="match status" value="1"/>
</dbReference>
<dbReference type="InterPro" id="IPR001857">
    <property type="entry name" value="Ribosomal_bL19"/>
</dbReference>
<dbReference type="InterPro" id="IPR018257">
    <property type="entry name" value="Ribosomal_bL19_CS"/>
</dbReference>
<dbReference type="InterPro" id="IPR038657">
    <property type="entry name" value="Ribosomal_bL19_sf"/>
</dbReference>
<dbReference type="InterPro" id="IPR008991">
    <property type="entry name" value="Translation_prot_SH3-like_sf"/>
</dbReference>
<dbReference type="NCBIfam" id="TIGR01024">
    <property type="entry name" value="rplS_bact"/>
    <property type="match status" value="1"/>
</dbReference>
<dbReference type="PANTHER" id="PTHR15680:SF9">
    <property type="entry name" value="LARGE RIBOSOMAL SUBUNIT PROTEIN BL19M"/>
    <property type="match status" value="1"/>
</dbReference>
<dbReference type="PANTHER" id="PTHR15680">
    <property type="entry name" value="RIBOSOMAL PROTEIN L19"/>
    <property type="match status" value="1"/>
</dbReference>
<dbReference type="Pfam" id="PF01245">
    <property type="entry name" value="Ribosomal_L19"/>
    <property type="match status" value="1"/>
</dbReference>
<dbReference type="PIRSF" id="PIRSF002191">
    <property type="entry name" value="Ribosomal_L19"/>
    <property type="match status" value="1"/>
</dbReference>
<dbReference type="PRINTS" id="PR00061">
    <property type="entry name" value="RIBOSOMALL19"/>
</dbReference>
<dbReference type="SUPFAM" id="SSF50104">
    <property type="entry name" value="Translation proteins SH3-like domain"/>
    <property type="match status" value="1"/>
</dbReference>
<dbReference type="PROSITE" id="PS01015">
    <property type="entry name" value="RIBOSOMAL_L19"/>
    <property type="match status" value="1"/>
</dbReference>
<evidence type="ECO:0000255" key="1">
    <source>
        <dbReference type="HAMAP-Rule" id="MF_00402"/>
    </source>
</evidence>
<evidence type="ECO:0000305" key="2"/>
<protein>
    <recommendedName>
        <fullName evidence="1">Large ribosomal subunit protein bL19</fullName>
    </recommendedName>
    <alternativeName>
        <fullName evidence="2">50S ribosomal protein L19</fullName>
    </alternativeName>
</protein>
<proteinExistence type="inferred from homology"/>
<comment type="function">
    <text evidence="1">This protein is located at the 30S-50S ribosomal subunit interface and may play a role in the structure and function of the aminoacyl-tRNA binding site.</text>
</comment>
<comment type="similarity">
    <text evidence="1">Belongs to the bacterial ribosomal protein bL19 family.</text>
</comment>
<name>RL19_MYCM1</name>
<accession>Q6KHL6</accession>
<gene>
    <name evidence="1" type="primary">rplS</name>
    <name type="ordered locus">MMOB4280</name>
</gene>
<sequence length="116" mass="13443">MQNKLLDIVENDQLRNDLPEFKSGDNIKVLVRIKEGAKERIQAFEGLVIAIKNYSTHKTFTVRKISNSVGVERTFPLNSPVIVSIEVLRKNKVRRSKLYYMRDLKGKSARLKELKK</sequence>
<keyword id="KW-1185">Reference proteome</keyword>
<keyword id="KW-0687">Ribonucleoprotein</keyword>
<keyword id="KW-0689">Ribosomal protein</keyword>
<feature type="chain" id="PRO_0000163488" description="Large ribosomal subunit protein bL19">
    <location>
        <begin position="1"/>
        <end position="116"/>
    </location>
</feature>
<reference key="1">
    <citation type="journal article" date="2004" name="Genome Res.">
        <title>The complete genome and proteome of Mycoplasma mobile.</title>
        <authorList>
            <person name="Jaffe J.D."/>
            <person name="Stange-Thomann N."/>
            <person name="Smith C."/>
            <person name="DeCaprio D."/>
            <person name="Fisher S."/>
            <person name="Butler J."/>
            <person name="Calvo S."/>
            <person name="Elkins T."/>
            <person name="FitzGerald M.G."/>
            <person name="Hafez N."/>
            <person name="Kodira C.D."/>
            <person name="Major J."/>
            <person name="Wang S."/>
            <person name="Wilkinson J."/>
            <person name="Nicol R."/>
            <person name="Nusbaum C."/>
            <person name="Birren B."/>
            <person name="Berg H.C."/>
            <person name="Church G.M."/>
        </authorList>
    </citation>
    <scope>NUCLEOTIDE SEQUENCE [LARGE SCALE GENOMIC DNA]</scope>
    <source>
        <strain>ATCC 43663 / NCTC 11711 / 163 K</strain>
    </source>
</reference>